<comment type="function">
    <text evidence="1">Plays a role in maintaining the mitochondrial genome and in controlling the mtDNA escape. Involved in the regulation of mtDNA nucleotide structure and number. May have a dispensable role in early maturation of pre-rRNA (By similarity).</text>
</comment>
<comment type="subcellular location">
    <subcellularLocation>
        <location evidence="1">Mitochondrion inner membrane</location>
        <topology evidence="1">Single-pass membrane protein</topology>
    </subcellularLocation>
</comment>
<comment type="similarity">
    <text evidence="5">Belongs to the YME2 family.</text>
</comment>
<reference key="1">
    <citation type="journal article" date="2005" name="Nature">
        <title>The genome sequence of the rice blast fungus Magnaporthe grisea.</title>
        <authorList>
            <person name="Dean R.A."/>
            <person name="Talbot N.J."/>
            <person name="Ebbole D.J."/>
            <person name="Farman M.L."/>
            <person name="Mitchell T.K."/>
            <person name="Orbach M.J."/>
            <person name="Thon M.R."/>
            <person name="Kulkarni R."/>
            <person name="Xu J.-R."/>
            <person name="Pan H."/>
            <person name="Read N.D."/>
            <person name="Lee Y.-H."/>
            <person name="Carbone I."/>
            <person name="Brown D."/>
            <person name="Oh Y.Y."/>
            <person name="Donofrio N."/>
            <person name="Jeong J.S."/>
            <person name="Soanes D.M."/>
            <person name="Djonovic S."/>
            <person name="Kolomiets E."/>
            <person name="Rehmeyer C."/>
            <person name="Li W."/>
            <person name="Harding M."/>
            <person name="Kim S."/>
            <person name="Lebrun M.-H."/>
            <person name="Bohnert H."/>
            <person name="Coughlan S."/>
            <person name="Butler J."/>
            <person name="Calvo S.E."/>
            <person name="Ma L.-J."/>
            <person name="Nicol R."/>
            <person name="Purcell S."/>
            <person name="Nusbaum C."/>
            <person name="Galagan J.E."/>
            <person name="Birren B.W."/>
        </authorList>
    </citation>
    <scope>NUCLEOTIDE SEQUENCE [LARGE SCALE GENOMIC DNA]</scope>
    <source>
        <strain>70-15 / ATCC MYA-4617 / FGSC 8958</strain>
    </source>
</reference>
<evidence type="ECO:0000250" key="1"/>
<evidence type="ECO:0000255" key="2"/>
<evidence type="ECO:0000255" key="3">
    <source>
        <dbReference type="PROSITE-ProRule" id="PRU00176"/>
    </source>
</evidence>
<evidence type="ECO:0000256" key="4">
    <source>
        <dbReference type="SAM" id="MobiDB-lite"/>
    </source>
</evidence>
<evidence type="ECO:0000305" key="5"/>
<gene>
    <name type="primary">YME2</name>
    <name type="ORF">MGG_06965</name>
</gene>
<sequence length="901" mass="100022">MIGGTRLLPFRLLAFGPAATRQPTTALRRSRVTLTGAPRGIYLGLGSGSGLNINNRRWESTTATTATASSSRPKSDDVAAEVDYGHIVPRANEAALYFDNIFPLGLSAILWRRWGTDEDFSEQLLKRFEKSSFGFGITDPISMVKRSIPKSLPIKVTEIIPRLKDGGAFVKFSHGPETTPAEIEESLAKSLQDRPVKPWFNPFTSVRVNAVKGVPWLEDLYRLPKARLKVEFCPPKELSKDSTSTELSQEALYGLFRRYGKLSEITPQPSDSKVTPRFAHVDFVRVRDAVMARNCLHGLTISQDNSATRLRLSYEQKVKPHKIWEWTTSHPRIVIPILAALLAAFTVVVFDPIREFFVRAHVQGSFRVSNSRLYRWFKRRTADVTNSVFQRHHDKGEQAGLQALWSQRKDIIDSVQKWLLETADTFIVVQGPRGSGTKELIIDQALKGRPNVLVIDCKPIVEARGESGTIRKLAVAVGYRPVFSWANSLSSMIDLAVQGTTGVKSGFSETLESQIVKILHTTASALKKVSLEQYQKDGSGAEISEDAYLEAHPEKRAVIVIDNFLHKHDDGGLVYDKIAEWAAAMVQSNIAHVVFLTNDSSYSKSLSKSLPDRIFRQVSLGDLSASVAKKYVLGHLEGLDRDESLKDDSSEVSRDDKGAENPSEDDIEAESKRRRDLAELDGCIDTLGGRLTDLEFLARRLKSGQSPRNAISEIVDQSSSEIIKMFLLAKKSTESTQTQWSAEQAWFLIKEIASKTSLRYNEVLLSPTFASSTTPSAADGEAAIEALAAAELVTVTSHRGRPQTIRAGRPVYQAAFTQLTQDAVLKARMNLLLLTELSKVEAKNIDKVETELALLGALPKQPREVTDRVTYLLGKLHSSQVKISELDREMAMLKGVLVREV</sequence>
<proteinExistence type="inferred from homology"/>
<dbReference type="EMBL" id="CM001231">
    <property type="protein sequence ID" value="EHA57099.1"/>
    <property type="molecule type" value="Genomic_DNA"/>
</dbReference>
<dbReference type="RefSeq" id="XP_003709711.1">
    <property type="nucleotide sequence ID" value="XM_003709663.1"/>
</dbReference>
<dbReference type="FunCoup" id="A4R1D5">
    <property type="interactions" value="113"/>
</dbReference>
<dbReference type="EnsemblFungi" id="MGG_06965T0">
    <property type="protein sequence ID" value="MGG_06965T0"/>
    <property type="gene ID" value="MGG_06965"/>
</dbReference>
<dbReference type="GeneID" id="2685138"/>
<dbReference type="KEGG" id="mgr:MGG_06965"/>
<dbReference type="VEuPathDB" id="FungiDB:MGG_06965"/>
<dbReference type="eggNOG" id="ENOG502QS0P">
    <property type="taxonomic scope" value="Eukaryota"/>
</dbReference>
<dbReference type="HOGENOM" id="CLU_007861_0_0_1"/>
<dbReference type="InParanoid" id="A4R1D5"/>
<dbReference type="OMA" id="WTPEQAW"/>
<dbReference type="OrthoDB" id="10267654at2759"/>
<dbReference type="Proteomes" id="UP000009058">
    <property type="component" value="Chromosome 1"/>
</dbReference>
<dbReference type="GO" id="GO:0005743">
    <property type="term" value="C:mitochondrial inner membrane"/>
    <property type="evidence" value="ECO:0007669"/>
    <property type="project" value="UniProtKB-SubCell"/>
</dbReference>
<dbReference type="GO" id="GO:0003723">
    <property type="term" value="F:RNA binding"/>
    <property type="evidence" value="ECO:0007669"/>
    <property type="project" value="UniProtKB-KW"/>
</dbReference>
<dbReference type="GO" id="GO:0000002">
    <property type="term" value="P:mitochondrial genome maintenance"/>
    <property type="evidence" value="ECO:0007669"/>
    <property type="project" value="InterPro"/>
</dbReference>
<dbReference type="GO" id="GO:0006397">
    <property type="term" value="P:mRNA processing"/>
    <property type="evidence" value="ECO:0007669"/>
    <property type="project" value="UniProtKB-KW"/>
</dbReference>
<dbReference type="CDD" id="cd12433">
    <property type="entry name" value="RRM_Yme2p_like"/>
    <property type="match status" value="1"/>
</dbReference>
<dbReference type="Gene3D" id="3.30.70.330">
    <property type="match status" value="1"/>
</dbReference>
<dbReference type="InterPro" id="IPR018850">
    <property type="entry name" value="Mt_escape_2_C"/>
</dbReference>
<dbReference type="InterPro" id="IPR012677">
    <property type="entry name" value="Nucleotide-bd_a/b_plait_sf"/>
</dbReference>
<dbReference type="InterPro" id="IPR035979">
    <property type="entry name" value="RBD_domain_sf"/>
</dbReference>
<dbReference type="InterPro" id="IPR000504">
    <property type="entry name" value="RRM_dom"/>
</dbReference>
<dbReference type="InterPro" id="IPR039627">
    <property type="entry name" value="Yme2_C"/>
</dbReference>
<dbReference type="InterPro" id="IPR034260">
    <property type="entry name" value="Yme2_RRM"/>
</dbReference>
<dbReference type="PANTHER" id="PTHR32198">
    <property type="entry name" value="MITOCHONDRIAL ESCAPE PROTEIN 2"/>
    <property type="match status" value="1"/>
</dbReference>
<dbReference type="PANTHER" id="PTHR32198:SF2">
    <property type="entry name" value="MITOCHONDRIAL ESCAPE PROTEIN 2"/>
    <property type="match status" value="1"/>
</dbReference>
<dbReference type="Pfam" id="PF10443">
    <property type="entry name" value="RNA12"/>
    <property type="match status" value="1"/>
</dbReference>
<dbReference type="Pfam" id="PF00076">
    <property type="entry name" value="RRM_1"/>
    <property type="match status" value="1"/>
</dbReference>
<dbReference type="SUPFAM" id="SSF54928">
    <property type="entry name" value="RNA-binding domain, RBD"/>
    <property type="match status" value="1"/>
</dbReference>
<dbReference type="PROSITE" id="PS50102">
    <property type="entry name" value="RRM"/>
    <property type="match status" value="1"/>
</dbReference>
<organism>
    <name type="scientific">Pyricularia oryzae (strain 70-15 / ATCC MYA-4617 / FGSC 8958)</name>
    <name type="common">Rice blast fungus</name>
    <name type="synonym">Magnaporthe oryzae</name>
    <dbReference type="NCBI Taxonomy" id="242507"/>
    <lineage>
        <taxon>Eukaryota</taxon>
        <taxon>Fungi</taxon>
        <taxon>Dikarya</taxon>
        <taxon>Ascomycota</taxon>
        <taxon>Pezizomycotina</taxon>
        <taxon>Sordariomycetes</taxon>
        <taxon>Sordariomycetidae</taxon>
        <taxon>Magnaporthales</taxon>
        <taxon>Pyriculariaceae</taxon>
        <taxon>Pyricularia</taxon>
    </lineage>
</organism>
<protein>
    <recommendedName>
        <fullName>Mitochondrial escape protein 2</fullName>
    </recommendedName>
</protein>
<feature type="transit peptide" description="Mitochondrion" evidence="2">
    <location>
        <begin position="1"/>
        <end position="59"/>
    </location>
</feature>
<feature type="chain" id="PRO_0000343125" description="Mitochondrial escape protein 2">
    <location>
        <begin position="60"/>
        <end position="901"/>
    </location>
</feature>
<feature type="topological domain" description="Mitochondrial matrix" evidence="2">
    <location>
        <begin position="60"/>
        <end position="332"/>
    </location>
</feature>
<feature type="transmembrane region" description="Helical" evidence="2">
    <location>
        <begin position="333"/>
        <end position="353"/>
    </location>
</feature>
<feature type="topological domain" description="Mitochondrial intermembrane" evidence="2">
    <location>
        <begin position="354"/>
        <end position="901"/>
    </location>
</feature>
<feature type="domain" description="RRM" evidence="3">
    <location>
        <begin position="226"/>
        <end position="317"/>
    </location>
</feature>
<feature type="region of interest" description="Disordered" evidence="4">
    <location>
        <begin position="644"/>
        <end position="672"/>
    </location>
</feature>
<feature type="compositionally biased region" description="Basic and acidic residues" evidence="4">
    <location>
        <begin position="644"/>
        <end position="659"/>
    </location>
</feature>
<accession>A4R1D5</accession>
<accession>G4MNU2</accession>
<keyword id="KW-0472">Membrane</keyword>
<keyword id="KW-0496">Mitochondrion</keyword>
<keyword id="KW-0999">Mitochondrion inner membrane</keyword>
<keyword id="KW-0507">mRNA processing</keyword>
<keyword id="KW-1185">Reference proteome</keyword>
<keyword id="KW-0694">RNA-binding</keyword>
<keyword id="KW-0809">Transit peptide</keyword>
<keyword id="KW-0812">Transmembrane</keyword>
<keyword id="KW-1133">Transmembrane helix</keyword>
<name>YME2_PYRO7</name>